<protein>
    <recommendedName>
        <fullName evidence="1">Ribulose bisphosphate carboxylase large chain</fullName>
        <shortName evidence="1">RuBisCO large subunit</shortName>
        <ecNumber evidence="1">4.1.1.39</ecNumber>
    </recommendedName>
</protein>
<sequence>MSKKYDAGVKEYRDTYWTPDYVPLDTDLLACFKCTGQEGVPREEVAAAVAAESSTGTWSTVWSELLTDLEFYKGRCYRIEDVPGDKESFYAFIAYPLDLFEEGSITNVLTSLVGNVFGFKALRHLRLEDIRFPMAFIKTCGGPPQGIVVERDRLNKYGRPLLGCTIKPKLGLSGKNYGRVVYECLRGGLDLTKDDENINSQPFQRWRDRFEFVAEAVKLAQQETGEVKGHYLNCTATTPEEMYERAEFAKELDMPIIMHDYITGGFTANTGLANWCRKNGMLLHIHRAMHAVIDRHPKHGIHFRVLAKCLRLSGGDQLHTGTVVGKLEGDRQTTLGYIDNLRESFVPEDRTRGNFFDQDWGSMPGVFAVASGGIHVWHMPALLAIFGDDSCLQFGGGTHGHPWGSAAGAAANRVALEACVKARNAGREIEKESRDILMEAAKHSPELAIALETWKEIKFEFDTVDKLDVQ</sequence>
<reference key="1">
    <citation type="journal article" date="2003" name="Proc. Natl. Acad. Sci. U.S.A.">
        <title>Genome sequence of the cyanobacterium Prochlorococcus marinus SS120, a nearly minimal oxyphototrophic genome.</title>
        <authorList>
            <person name="Dufresne A."/>
            <person name="Salanoubat M."/>
            <person name="Partensky F."/>
            <person name="Artiguenave F."/>
            <person name="Axmann I.M."/>
            <person name="Barbe V."/>
            <person name="Duprat S."/>
            <person name="Galperin M.Y."/>
            <person name="Koonin E.V."/>
            <person name="Le Gall F."/>
            <person name="Makarova K.S."/>
            <person name="Ostrowski M."/>
            <person name="Oztas S."/>
            <person name="Robert C."/>
            <person name="Rogozin I.B."/>
            <person name="Scanlan D.J."/>
            <person name="Tandeau de Marsac N."/>
            <person name="Weissenbach J."/>
            <person name="Wincker P."/>
            <person name="Wolf Y.I."/>
            <person name="Hess W.R."/>
        </authorList>
    </citation>
    <scope>NUCLEOTIDE SEQUENCE [LARGE SCALE GENOMIC DNA]</scope>
    <source>
        <strain>SARG / CCMP1375 / SS120</strain>
    </source>
</reference>
<evidence type="ECO:0000255" key="1">
    <source>
        <dbReference type="HAMAP-Rule" id="MF_01338"/>
    </source>
</evidence>
<name>RBL_PROMA</name>
<dbReference type="EC" id="4.1.1.39" evidence="1"/>
<dbReference type="EMBL" id="AE017126">
    <property type="protein sequence ID" value="AAP99596.1"/>
    <property type="molecule type" value="Genomic_DNA"/>
</dbReference>
<dbReference type="RefSeq" id="NP_874944.1">
    <property type="nucleotide sequence ID" value="NC_005042.1"/>
</dbReference>
<dbReference type="RefSeq" id="WP_011124704.1">
    <property type="nucleotide sequence ID" value="NC_005042.1"/>
</dbReference>
<dbReference type="SMR" id="Q7VD33"/>
<dbReference type="STRING" id="167539.Pro_0551"/>
<dbReference type="EnsemblBacteria" id="AAP99596">
    <property type="protein sequence ID" value="AAP99596"/>
    <property type="gene ID" value="Pro_0551"/>
</dbReference>
<dbReference type="KEGG" id="pma:Pro_0551"/>
<dbReference type="PATRIC" id="fig|167539.5.peg.566"/>
<dbReference type="eggNOG" id="COG1850">
    <property type="taxonomic scope" value="Bacteria"/>
</dbReference>
<dbReference type="HOGENOM" id="CLU_031450_2_0_3"/>
<dbReference type="OrthoDB" id="9770811at2"/>
<dbReference type="Proteomes" id="UP000001420">
    <property type="component" value="Chromosome"/>
</dbReference>
<dbReference type="GO" id="GO:0031470">
    <property type="term" value="C:carboxysome"/>
    <property type="evidence" value="ECO:0007669"/>
    <property type="project" value="UniProtKB-SubCell"/>
</dbReference>
<dbReference type="GO" id="GO:0000287">
    <property type="term" value="F:magnesium ion binding"/>
    <property type="evidence" value="ECO:0007669"/>
    <property type="project" value="UniProtKB-UniRule"/>
</dbReference>
<dbReference type="GO" id="GO:0004497">
    <property type="term" value="F:monooxygenase activity"/>
    <property type="evidence" value="ECO:0007669"/>
    <property type="project" value="UniProtKB-KW"/>
</dbReference>
<dbReference type="GO" id="GO:0016984">
    <property type="term" value="F:ribulose-bisphosphate carboxylase activity"/>
    <property type="evidence" value="ECO:0007669"/>
    <property type="project" value="UniProtKB-UniRule"/>
</dbReference>
<dbReference type="GO" id="GO:0009853">
    <property type="term" value="P:photorespiration"/>
    <property type="evidence" value="ECO:0007669"/>
    <property type="project" value="UniProtKB-KW"/>
</dbReference>
<dbReference type="GO" id="GO:0019253">
    <property type="term" value="P:reductive pentose-phosphate cycle"/>
    <property type="evidence" value="ECO:0007669"/>
    <property type="project" value="UniProtKB-UniRule"/>
</dbReference>
<dbReference type="Gene3D" id="3.20.20.110">
    <property type="entry name" value="Ribulose bisphosphate carboxylase, large subunit, C-terminal domain"/>
    <property type="match status" value="1"/>
</dbReference>
<dbReference type="Gene3D" id="3.30.70.150">
    <property type="entry name" value="RuBisCO large subunit, N-terminal domain"/>
    <property type="match status" value="1"/>
</dbReference>
<dbReference type="HAMAP" id="MF_01338">
    <property type="entry name" value="RuBisCO_L_type1"/>
    <property type="match status" value="1"/>
</dbReference>
<dbReference type="InterPro" id="IPR033966">
    <property type="entry name" value="RuBisCO"/>
</dbReference>
<dbReference type="InterPro" id="IPR000685">
    <property type="entry name" value="RuBisCO_lsu_C"/>
</dbReference>
<dbReference type="InterPro" id="IPR036376">
    <property type="entry name" value="RuBisCO_lsu_C_sf"/>
</dbReference>
<dbReference type="InterPro" id="IPR017443">
    <property type="entry name" value="RuBisCO_lsu_fd_N"/>
</dbReference>
<dbReference type="InterPro" id="IPR036422">
    <property type="entry name" value="RuBisCO_lsu_N_sf"/>
</dbReference>
<dbReference type="InterPro" id="IPR020888">
    <property type="entry name" value="RuBisCO_lsuI"/>
</dbReference>
<dbReference type="NCBIfam" id="NF003252">
    <property type="entry name" value="PRK04208.1"/>
    <property type="match status" value="1"/>
</dbReference>
<dbReference type="PANTHER" id="PTHR42704">
    <property type="entry name" value="RIBULOSE BISPHOSPHATE CARBOXYLASE"/>
    <property type="match status" value="1"/>
</dbReference>
<dbReference type="PANTHER" id="PTHR42704:SF17">
    <property type="entry name" value="RIBULOSE BISPHOSPHATE CARBOXYLASE LARGE CHAIN"/>
    <property type="match status" value="1"/>
</dbReference>
<dbReference type="Pfam" id="PF00016">
    <property type="entry name" value="RuBisCO_large"/>
    <property type="match status" value="1"/>
</dbReference>
<dbReference type="Pfam" id="PF02788">
    <property type="entry name" value="RuBisCO_large_N"/>
    <property type="match status" value="1"/>
</dbReference>
<dbReference type="SFLD" id="SFLDG01052">
    <property type="entry name" value="RuBisCO"/>
    <property type="match status" value="1"/>
</dbReference>
<dbReference type="SFLD" id="SFLDS00014">
    <property type="entry name" value="RuBisCO"/>
    <property type="match status" value="1"/>
</dbReference>
<dbReference type="SFLD" id="SFLDG00301">
    <property type="entry name" value="RuBisCO-like_proteins"/>
    <property type="match status" value="1"/>
</dbReference>
<dbReference type="SUPFAM" id="SSF51649">
    <property type="entry name" value="RuBisCo, C-terminal domain"/>
    <property type="match status" value="1"/>
</dbReference>
<dbReference type="SUPFAM" id="SSF54966">
    <property type="entry name" value="RuBisCO, large subunit, small (N-terminal) domain"/>
    <property type="match status" value="1"/>
</dbReference>
<accession>Q7VD33</accession>
<organism>
    <name type="scientific">Prochlorococcus marinus (strain SARG / CCMP1375 / SS120)</name>
    <dbReference type="NCBI Taxonomy" id="167539"/>
    <lineage>
        <taxon>Bacteria</taxon>
        <taxon>Bacillati</taxon>
        <taxon>Cyanobacteriota</taxon>
        <taxon>Cyanophyceae</taxon>
        <taxon>Synechococcales</taxon>
        <taxon>Prochlorococcaceae</taxon>
        <taxon>Prochlorococcus</taxon>
    </lineage>
</organism>
<comment type="function">
    <text evidence="1">RuBisCO catalyzes two reactions: the carboxylation of D-ribulose 1,5-bisphosphate, the primary event in carbon dioxide fixation, as well as the oxidative fragmentation of the pentose substrate in the photorespiration process. Both reactions occur simultaneously and in competition at the same active site.</text>
</comment>
<comment type="catalytic activity">
    <reaction evidence="1">
        <text>2 (2R)-3-phosphoglycerate + 2 H(+) = D-ribulose 1,5-bisphosphate + CO2 + H2O</text>
        <dbReference type="Rhea" id="RHEA:23124"/>
        <dbReference type="ChEBI" id="CHEBI:15377"/>
        <dbReference type="ChEBI" id="CHEBI:15378"/>
        <dbReference type="ChEBI" id="CHEBI:16526"/>
        <dbReference type="ChEBI" id="CHEBI:57870"/>
        <dbReference type="ChEBI" id="CHEBI:58272"/>
        <dbReference type="EC" id="4.1.1.39"/>
    </reaction>
</comment>
<comment type="catalytic activity">
    <reaction evidence="1">
        <text>D-ribulose 1,5-bisphosphate + O2 = 2-phosphoglycolate + (2R)-3-phosphoglycerate + 2 H(+)</text>
        <dbReference type="Rhea" id="RHEA:36631"/>
        <dbReference type="ChEBI" id="CHEBI:15378"/>
        <dbReference type="ChEBI" id="CHEBI:15379"/>
        <dbReference type="ChEBI" id="CHEBI:57870"/>
        <dbReference type="ChEBI" id="CHEBI:58033"/>
        <dbReference type="ChEBI" id="CHEBI:58272"/>
    </reaction>
</comment>
<comment type="cofactor">
    <cofactor evidence="1">
        <name>Mg(2+)</name>
        <dbReference type="ChEBI" id="CHEBI:18420"/>
    </cofactor>
    <text evidence="1">Binds 1 Mg(2+) ion per subunit.</text>
</comment>
<comment type="subunit">
    <text evidence="1">Heterohexadecamer of 8 large chains and 8 small chains.</text>
</comment>
<comment type="subcellular location">
    <subcellularLocation>
        <location evidence="1">Carboxysome</location>
    </subcellularLocation>
</comment>
<comment type="miscellaneous">
    <text evidence="1">The basic functional RuBisCO is composed of a large chain homodimer in a 'head-to-tail' conformation. In form I RuBisCO this homodimer is arranged in a barrel-like tetramer with the small subunits forming a tetrameric 'cap' on each end of the 'barrel'.</text>
</comment>
<comment type="similarity">
    <text evidence="1">Belongs to the RuBisCO large chain family. Type I subfamily.</text>
</comment>
<proteinExistence type="inferred from homology"/>
<keyword id="KW-1283">Bacterial microcompartment</keyword>
<keyword id="KW-0113">Calvin cycle</keyword>
<keyword id="KW-0120">Carbon dioxide fixation</keyword>
<keyword id="KW-1282">Carboxysome</keyword>
<keyword id="KW-0456">Lyase</keyword>
<keyword id="KW-0460">Magnesium</keyword>
<keyword id="KW-0479">Metal-binding</keyword>
<keyword id="KW-0503">Monooxygenase</keyword>
<keyword id="KW-0560">Oxidoreductase</keyword>
<keyword id="KW-0601">Photorespiration</keyword>
<keyword id="KW-0602">Photosynthesis</keyword>
<keyword id="KW-1185">Reference proteome</keyword>
<feature type="chain" id="PRO_0000062637" description="Ribulose bisphosphate carboxylase large chain">
    <location>
        <begin position="1"/>
        <end position="470"/>
    </location>
</feature>
<feature type="active site" description="Proton acceptor" evidence="1">
    <location>
        <position position="167"/>
    </location>
</feature>
<feature type="active site" description="Proton acceptor" evidence="1">
    <location>
        <position position="286"/>
    </location>
</feature>
<feature type="binding site" description="in homodimeric partner" evidence="1">
    <location>
        <position position="115"/>
    </location>
    <ligand>
        <name>substrate</name>
    </ligand>
</feature>
<feature type="binding site" evidence="1">
    <location>
        <position position="165"/>
    </location>
    <ligand>
        <name>substrate</name>
    </ligand>
</feature>
<feature type="binding site" evidence="1">
    <location>
        <position position="169"/>
    </location>
    <ligand>
        <name>substrate</name>
    </ligand>
</feature>
<feature type="binding site" description="via carbamate group" evidence="1">
    <location>
        <position position="193"/>
    </location>
    <ligand>
        <name>Mg(2+)</name>
        <dbReference type="ChEBI" id="CHEBI:18420"/>
    </ligand>
</feature>
<feature type="binding site" evidence="1">
    <location>
        <position position="195"/>
    </location>
    <ligand>
        <name>Mg(2+)</name>
        <dbReference type="ChEBI" id="CHEBI:18420"/>
    </ligand>
</feature>
<feature type="binding site" evidence="1">
    <location>
        <position position="196"/>
    </location>
    <ligand>
        <name>Mg(2+)</name>
        <dbReference type="ChEBI" id="CHEBI:18420"/>
    </ligand>
</feature>
<feature type="binding site" evidence="1">
    <location>
        <position position="287"/>
    </location>
    <ligand>
        <name>substrate</name>
    </ligand>
</feature>
<feature type="binding site" evidence="1">
    <location>
        <position position="319"/>
    </location>
    <ligand>
        <name>substrate</name>
    </ligand>
</feature>
<feature type="binding site" evidence="1">
    <location>
        <position position="371"/>
    </location>
    <ligand>
        <name>substrate</name>
    </ligand>
</feature>
<feature type="site" description="Transition state stabilizer" evidence="1">
    <location>
        <position position="326"/>
    </location>
</feature>
<feature type="modified residue" description="N6-carboxylysine" evidence="1">
    <location>
        <position position="193"/>
    </location>
</feature>
<gene>
    <name evidence="1" type="primary">cbbL</name>
    <name evidence="1" type="synonym">rbcL</name>
    <name type="ordered locus">Pro_0551</name>
</gene>